<dbReference type="EMBL" id="AF492591">
    <property type="protein sequence ID" value="AAO31544.1"/>
    <property type="molecule type" value="Genomic_DNA"/>
</dbReference>
<dbReference type="RefSeq" id="WP_011097470.1">
    <property type="nucleotide sequence ID" value="NC_004555.1"/>
</dbReference>
<dbReference type="KEGG" id="bab:repA2"/>
<dbReference type="eggNOG" id="ENOG5032GWB">
    <property type="taxonomic scope" value="Bacteria"/>
</dbReference>
<dbReference type="HOGENOM" id="CLU_084990_0_0_6"/>
<dbReference type="OrthoDB" id="6497710at2"/>
<dbReference type="Proteomes" id="UP000000601">
    <property type="component" value="Plasmid pBBp1"/>
</dbReference>
<dbReference type="GO" id="GO:0006260">
    <property type="term" value="P:DNA replication"/>
    <property type="evidence" value="ECO:0007669"/>
    <property type="project" value="UniProtKB-KW"/>
</dbReference>
<dbReference type="GO" id="GO:0006276">
    <property type="term" value="P:plasmid maintenance"/>
    <property type="evidence" value="ECO:0007669"/>
    <property type="project" value="UniProtKB-KW"/>
</dbReference>
<dbReference type="InterPro" id="IPR003446">
    <property type="entry name" value="Plasmid_replication_init_RepA"/>
</dbReference>
<dbReference type="NCBIfam" id="NF040977">
    <property type="entry name" value="RepA_IncFII_LM"/>
    <property type="match status" value="1"/>
</dbReference>
<dbReference type="Pfam" id="PF02387">
    <property type="entry name" value="IncFII_repA"/>
    <property type="match status" value="2"/>
</dbReference>
<organism>
    <name type="scientific">Buchnera aphidicola subsp. Baizongia pistaciae (strain Bp)</name>
    <dbReference type="NCBI Taxonomy" id="224915"/>
    <lineage>
        <taxon>Bacteria</taxon>
        <taxon>Pseudomonadati</taxon>
        <taxon>Pseudomonadota</taxon>
        <taxon>Gammaproteobacteria</taxon>
        <taxon>Enterobacterales</taxon>
        <taxon>Erwiniaceae</taxon>
        <taxon>Buchnera</taxon>
    </lineage>
</organism>
<sequence length="239" mass="27906">MLNIKTKKKNKKRIYVFNKNPEFKFKHLVFQKNKFILKIINEIDKIDLMRSEIFNSTLPIDPQTGNILVRFRKLNRNRLLAIKAIIQAMLYHFNIKTKKVTASVEQLADECGLSTVSKSGNKSITRASRLISQFMEPMGFIKCKKIKTTNNKFSKEIILTPLFFMILVKNSSLSEGDTHLKQEFKILKNKNVHINSSETFAKQEILKKIINKYSLNKLKKLGPKKIKEKINTEYKNIKK</sequence>
<geneLocation type="plasmid">
    <name>pBBp1</name>
</geneLocation>
<comment type="function">
    <text evidence="1">This protein is essential for plasmid replication; it is involved in copy control functions.</text>
</comment>
<comment type="similarity">
    <text evidence="2">Belongs to the IncFII RepA family.</text>
</comment>
<gene>
    <name type="primary">repA2</name>
    <name type="ordered locus">bbp_602</name>
</gene>
<protein>
    <recommendedName>
        <fullName>Probable replication-associated protein repA2</fullName>
    </recommendedName>
</protein>
<feature type="chain" id="PRO_0000216232" description="Probable replication-associated protein repA2">
    <location>
        <begin position="1"/>
        <end position="239"/>
    </location>
</feature>
<keyword id="KW-0235">DNA replication</keyword>
<keyword id="KW-0614">Plasmid</keyword>
<keyword id="KW-0615">Plasmid copy control</keyword>
<keyword id="KW-1185">Reference proteome</keyword>
<reference key="1">
    <citation type="journal article" date="2003" name="Proc. Natl. Acad. Sci. U.S.A.">
        <title>Reductive genome evolution in Buchnera aphidicola.</title>
        <authorList>
            <person name="van Ham R.C.H.J."/>
            <person name="Kamerbeek J."/>
            <person name="Palacios C."/>
            <person name="Rausell C."/>
            <person name="Abascal F."/>
            <person name="Bastolla U."/>
            <person name="Fernandez J.M."/>
            <person name="Jimenez L."/>
            <person name="Postigo M."/>
            <person name="Silva F.J."/>
            <person name="Tamames J."/>
            <person name="Viguera E."/>
            <person name="Latorre A."/>
            <person name="Valencia A."/>
            <person name="Moran F."/>
            <person name="Moya A."/>
        </authorList>
    </citation>
    <scope>NUCLEOTIDE SEQUENCE [LARGE SCALE GENOMIC DNA]</scope>
    <source>
        <strain>Bp</strain>
    </source>
</reference>
<proteinExistence type="inferred from homology"/>
<evidence type="ECO:0000250" key="1"/>
<evidence type="ECO:0000305" key="2"/>
<accession>Q89B47</accession>
<name>REPA2_BUCBP</name>